<reference key="1">
    <citation type="journal article" date="2007" name="Genome Res.">
        <title>Genome characteristics of facultatively symbiotic Frankia sp. strains reflect host range and host plant biogeography.</title>
        <authorList>
            <person name="Normand P."/>
            <person name="Lapierre P."/>
            <person name="Tisa L.S."/>
            <person name="Gogarten J.P."/>
            <person name="Alloisio N."/>
            <person name="Bagnarol E."/>
            <person name="Bassi C.A."/>
            <person name="Berry A.M."/>
            <person name="Bickhart D.M."/>
            <person name="Choisne N."/>
            <person name="Couloux A."/>
            <person name="Cournoyer B."/>
            <person name="Cruveiller S."/>
            <person name="Daubin V."/>
            <person name="Demange N."/>
            <person name="Francino M.P."/>
            <person name="Goltsman E."/>
            <person name="Huang Y."/>
            <person name="Kopp O.R."/>
            <person name="Labarre L."/>
            <person name="Lapidus A."/>
            <person name="Lavire C."/>
            <person name="Marechal J."/>
            <person name="Martinez M."/>
            <person name="Mastronunzio J.E."/>
            <person name="Mullin B.C."/>
            <person name="Niemann J."/>
            <person name="Pujic P."/>
            <person name="Rawnsley T."/>
            <person name="Rouy Z."/>
            <person name="Schenowitz C."/>
            <person name="Sellstedt A."/>
            <person name="Tavares F."/>
            <person name="Tomkins J.P."/>
            <person name="Vallenet D."/>
            <person name="Valverde C."/>
            <person name="Wall L.G."/>
            <person name="Wang Y."/>
            <person name="Medigue C."/>
            <person name="Benson D.R."/>
        </authorList>
    </citation>
    <scope>NUCLEOTIDE SEQUENCE [LARGE SCALE GENOMIC DNA]</scope>
    <source>
        <strain>DSM 45986 / CECT 9034 / ACN14a</strain>
    </source>
</reference>
<gene>
    <name evidence="1" type="primary">eno</name>
    <name type="ordered locus">FRAAL6233</name>
</gene>
<name>ENO_FRAAA</name>
<keyword id="KW-0963">Cytoplasm</keyword>
<keyword id="KW-0324">Glycolysis</keyword>
<keyword id="KW-0456">Lyase</keyword>
<keyword id="KW-0460">Magnesium</keyword>
<keyword id="KW-0479">Metal-binding</keyword>
<keyword id="KW-1185">Reference proteome</keyword>
<keyword id="KW-0964">Secreted</keyword>
<accession>Q0RCG8</accession>
<protein>
    <recommendedName>
        <fullName evidence="1">Enolase</fullName>
        <ecNumber evidence="1">4.2.1.11</ecNumber>
    </recommendedName>
    <alternativeName>
        <fullName evidence="1">2-phospho-D-glycerate hydro-lyase</fullName>
    </alternativeName>
    <alternativeName>
        <fullName evidence="1">2-phosphoglycerate dehydratase</fullName>
    </alternativeName>
</protein>
<dbReference type="EC" id="4.2.1.11" evidence="1"/>
<dbReference type="EMBL" id="CT573213">
    <property type="protein sequence ID" value="CAJ64856.1"/>
    <property type="status" value="ALT_INIT"/>
    <property type="molecule type" value="Genomic_DNA"/>
</dbReference>
<dbReference type="RefSeq" id="WP_041939851.1">
    <property type="nucleotide sequence ID" value="NC_008278.1"/>
</dbReference>
<dbReference type="SMR" id="Q0RCG8"/>
<dbReference type="STRING" id="326424.FRAAL6233"/>
<dbReference type="KEGG" id="fal:FRAAL6233"/>
<dbReference type="eggNOG" id="COG0148">
    <property type="taxonomic scope" value="Bacteria"/>
</dbReference>
<dbReference type="HOGENOM" id="CLU_031223_2_1_11"/>
<dbReference type="OrthoDB" id="9804716at2"/>
<dbReference type="UniPathway" id="UPA00109">
    <property type="reaction ID" value="UER00187"/>
</dbReference>
<dbReference type="Proteomes" id="UP000000657">
    <property type="component" value="Chromosome"/>
</dbReference>
<dbReference type="GO" id="GO:0009986">
    <property type="term" value="C:cell surface"/>
    <property type="evidence" value="ECO:0007669"/>
    <property type="project" value="UniProtKB-SubCell"/>
</dbReference>
<dbReference type="GO" id="GO:0005576">
    <property type="term" value="C:extracellular region"/>
    <property type="evidence" value="ECO:0007669"/>
    <property type="project" value="UniProtKB-SubCell"/>
</dbReference>
<dbReference type="GO" id="GO:0000015">
    <property type="term" value="C:phosphopyruvate hydratase complex"/>
    <property type="evidence" value="ECO:0007669"/>
    <property type="project" value="InterPro"/>
</dbReference>
<dbReference type="GO" id="GO:0000287">
    <property type="term" value="F:magnesium ion binding"/>
    <property type="evidence" value="ECO:0007669"/>
    <property type="project" value="UniProtKB-UniRule"/>
</dbReference>
<dbReference type="GO" id="GO:0004634">
    <property type="term" value="F:phosphopyruvate hydratase activity"/>
    <property type="evidence" value="ECO:0007669"/>
    <property type="project" value="UniProtKB-UniRule"/>
</dbReference>
<dbReference type="GO" id="GO:0006096">
    <property type="term" value="P:glycolytic process"/>
    <property type="evidence" value="ECO:0007669"/>
    <property type="project" value="UniProtKB-UniRule"/>
</dbReference>
<dbReference type="CDD" id="cd03313">
    <property type="entry name" value="enolase"/>
    <property type="match status" value="1"/>
</dbReference>
<dbReference type="FunFam" id="3.20.20.120:FF:000001">
    <property type="entry name" value="Enolase"/>
    <property type="match status" value="1"/>
</dbReference>
<dbReference type="FunFam" id="3.30.390.10:FF:000001">
    <property type="entry name" value="Enolase"/>
    <property type="match status" value="1"/>
</dbReference>
<dbReference type="Gene3D" id="3.20.20.120">
    <property type="entry name" value="Enolase-like C-terminal domain"/>
    <property type="match status" value="1"/>
</dbReference>
<dbReference type="Gene3D" id="3.30.390.10">
    <property type="entry name" value="Enolase-like, N-terminal domain"/>
    <property type="match status" value="1"/>
</dbReference>
<dbReference type="HAMAP" id="MF_00318">
    <property type="entry name" value="Enolase"/>
    <property type="match status" value="1"/>
</dbReference>
<dbReference type="InterPro" id="IPR000941">
    <property type="entry name" value="Enolase"/>
</dbReference>
<dbReference type="InterPro" id="IPR036849">
    <property type="entry name" value="Enolase-like_C_sf"/>
</dbReference>
<dbReference type="InterPro" id="IPR029017">
    <property type="entry name" value="Enolase-like_N"/>
</dbReference>
<dbReference type="InterPro" id="IPR020810">
    <property type="entry name" value="Enolase_C"/>
</dbReference>
<dbReference type="InterPro" id="IPR020809">
    <property type="entry name" value="Enolase_CS"/>
</dbReference>
<dbReference type="InterPro" id="IPR020811">
    <property type="entry name" value="Enolase_N"/>
</dbReference>
<dbReference type="NCBIfam" id="TIGR01060">
    <property type="entry name" value="eno"/>
    <property type="match status" value="1"/>
</dbReference>
<dbReference type="PANTHER" id="PTHR11902">
    <property type="entry name" value="ENOLASE"/>
    <property type="match status" value="1"/>
</dbReference>
<dbReference type="PANTHER" id="PTHR11902:SF1">
    <property type="entry name" value="ENOLASE"/>
    <property type="match status" value="1"/>
</dbReference>
<dbReference type="Pfam" id="PF00113">
    <property type="entry name" value="Enolase_C"/>
    <property type="match status" value="1"/>
</dbReference>
<dbReference type="Pfam" id="PF03952">
    <property type="entry name" value="Enolase_N"/>
    <property type="match status" value="1"/>
</dbReference>
<dbReference type="PIRSF" id="PIRSF001400">
    <property type="entry name" value="Enolase"/>
    <property type="match status" value="1"/>
</dbReference>
<dbReference type="PRINTS" id="PR00148">
    <property type="entry name" value="ENOLASE"/>
</dbReference>
<dbReference type="SFLD" id="SFLDS00001">
    <property type="entry name" value="Enolase"/>
    <property type="match status" value="1"/>
</dbReference>
<dbReference type="SFLD" id="SFLDF00002">
    <property type="entry name" value="enolase"/>
    <property type="match status" value="1"/>
</dbReference>
<dbReference type="SMART" id="SM01192">
    <property type="entry name" value="Enolase_C"/>
    <property type="match status" value="1"/>
</dbReference>
<dbReference type="SMART" id="SM01193">
    <property type="entry name" value="Enolase_N"/>
    <property type="match status" value="1"/>
</dbReference>
<dbReference type="SUPFAM" id="SSF51604">
    <property type="entry name" value="Enolase C-terminal domain-like"/>
    <property type="match status" value="1"/>
</dbReference>
<dbReference type="SUPFAM" id="SSF54826">
    <property type="entry name" value="Enolase N-terminal domain-like"/>
    <property type="match status" value="1"/>
</dbReference>
<dbReference type="PROSITE" id="PS00164">
    <property type="entry name" value="ENOLASE"/>
    <property type="match status" value="1"/>
</dbReference>
<evidence type="ECO:0000255" key="1">
    <source>
        <dbReference type="HAMAP-Rule" id="MF_00318"/>
    </source>
</evidence>
<evidence type="ECO:0000305" key="2"/>
<proteinExistence type="inferred from homology"/>
<feature type="chain" id="PRO_0000280849" description="Enolase">
    <location>
        <begin position="1"/>
        <end position="427"/>
    </location>
</feature>
<feature type="active site" description="Proton donor" evidence="1">
    <location>
        <position position="204"/>
    </location>
</feature>
<feature type="active site" description="Proton acceptor" evidence="1">
    <location>
        <position position="334"/>
    </location>
</feature>
<feature type="binding site" evidence="1">
    <location>
        <position position="162"/>
    </location>
    <ligand>
        <name>(2R)-2-phosphoglycerate</name>
        <dbReference type="ChEBI" id="CHEBI:58289"/>
    </ligand>
</feature>
<feature type="binding site" evidence="1">
    <location>
        <position position="241"/>
    </location>
    <ligand>
        <name>Mg(2+)</name>
        <dbReference type="ChEBI" id="CHEBI:18420"/>
    </ligand>
</feature>
<feature type="binding site" evidence="1">
    <location>
        <position position="282"/>
    </location>
    <ligand>
        <name>Mg(2+)</name>
        <dbReference type="ChEBI" id="CHEBI:18420"/>
    </ligand>
</feature>
<feature type="binding site" evidence="1">
    <location>
        <position position="309"/>
    </location>
    <ligand>
        <name>Mg(2+)</name>
        <dbReference type="ChEBI" id="CHEBI:18420"/>
    </ligand>
</feature>
<feature type="binding site" evidence="1">
    <location>
        <position position="334"/>
    </location>
    <ligand>
        <name>(2R)-2-phosphoglycerate</name>
        <dbReference type="ChEBI" id="CHEBI:58289"/>
    </ligand>
</feature>
<feature type="binding site" evidence="1">
    <location>
        <position position="363"/>
    </location>
    <ligand>
        <name>(2R)-2-phosphoglycerate</name>
        <dbReference type="ChEBI" id="CHEBI:58289"/>
    </ligand>
</feature>
<feature type="binding site" evidence="1">
    <location>
        <position position="364"/>
    </location>
    <ligand>
        <name>(2R)-2-phosphoglycerate</name>
        <dbReference type="ChEBI" id="CHEBI:58289"/>
    </ligand>
</feature>
<feature type="binding site" evidence="1">
    <location>
        <position position="385"/>
    </location>
    <ligand>
        <name>(2R)-2-phosphoglycerate</name>
        <dbReference type="ChEBI" id="CHEBI:58289"/>
    </ligand>
</feature>
<organism>
    <name type="scientific">Frankia alni (strain DSM 45986 / CECT 9034 / ACN14a)</name>
    <dbReference type="NCBI Taxonomy" id="326424"/>
    <lineage>
        <taxon>Bacteria</taxon>
        <taxon>Bacillati</taxon>
        <taxon>Actinomycetota</taxon>
        <taxon>Actinomycetes</taxon>
        <taxon>Frankiales</taxon>
        <taxon>Frankiaceae</taxon>
        <taxon>Frankia</taxon>
    </lineage>
</organism>
<comment type="function">
    <text evidence="1">Catalyzes the reversible conversion of 2-phosphoglycerate (2-PG) into phosphoenolpyruvate (PEP). It is essential for the degradation of carbohydrates via glycolysis.</text>
</comment>
<comment type="catalytic activity">
    <reaction evidence="1">
        <text>(2R)-2-phosphoglycerate = phosphoenolpyruvate + H2O</text>
        <dbReference type="Rhea" id="RHEA:10164"/>
        <dbReference type="ChEBI" id="CHEBI:15377"/>
        <dbReference type="ChEBI" id="CHEBI:58289"/>
        <dbReference type="ChEBI" id="CHEBI:58702"/>
        <dbReference type="EC" id="4.2.1.11"/>
    </reaction>
</comment>
<comment type="cofactor">
    <cofactor evidence="1">
        <name>Mg(2+)</name>
        <dbReference type="ChEBI" id="CHEBI:18420"/>
    </cofactor>
    <text evidence="1">Binds a second Mg(2+) ion via substrate during catalysis.</text>
</comment>
<comment type="pathway">
    <text evidence="1">Carbohydrate degradation; glycolysis; pyruvate from D-glyceraldehyde 3-phosphate: step 4/5.</text>
</comment>
<comment type="subcellular location">
    <subcellularLocation>
        <location evidence="1">Cytoplasm</location>
    </subcellularLocation>
    <subcellularLocation>
        <location evidence="1">Secreted</location>
    </subcellularLocation>
    <subcellularLocation>
        <location evidence="1">Cell surface</location>
    </subcellularLocation>
    <text evidence="1">Fractions of enolase are present in both the cytoplasm and on the cell surface.</text>
</comment>
<comment type="similarity">
    <text evidence="1">Belongs to the enolase family.</text>
</comment>
<comment type="sequence caution" evidence="2">
    <conflict type="erroneous initiation">
        <sequence resource="EMBL-CDS" id="CAJ64856"/>
    </conflict>
    <text>Extended N-terminus.</text>
</comment>
<sequence>MPSIEAVGAREILDSRGNPTVEVEVVLEDGTLGRAAVPSGASTGAFEAVELRDGEDRYGGKGVRKAVAAVIERIGPAIIELEATEQRLLDQTLIDLDGTPGKSALGANALLGVSLAVAKAAAAASGLPLFRYLGGPSAHLLPVPMLNILNGGAHADTNVDIQEFMIAPIGASSFSESLRWGAEVYHALKSVLKARGLGTGVGDEGGFAPSLPTNRDALDLIAEAVDKVGLRLGSDVALALDVASTEFYADGSYTFEGSTRTAEELSDYYAELVGAYPIVSIEDPLAEDDWSGWVALTERLGTKVQLVGDDLFVTNPERLARGIASKAANALLVKVNQIGTLTETLDAVNLAHRNGYRAMMSHRSGETEDTTIADLAVAVDCGQIKTGAPARSERVAKYNQLLRIEEELDDAARFAGAAAFPRHGQPA</sequence>